<proteinExistence type="inferred from homology"/>
<protein>
    <recommendedName>
        <fullName evidence="1">Large ribosomal subunit protein uL24</fullName>
    </recommendedName>
    <alternativeName>
        <fullName evidence="2">50S ribosomal protein L24</fullName>
    </alternativeName>
</protein>
<name>RL24_GLAP5</name>
<sequence length="103" mass="11184">MAAKIRQNDEVIVLAGKDKGKRGKVTKVLPNGKVVVEGINIITKHEKPVPALGKAGGLVKKEAAIDASNVAIFNPETNKADRVGFRFEDGKKVRFFKSNEKTI</sequence>
<keyword id="KW-1185">Reference proteome</keyword>
<keyword id="KW-0687">Ribonucleoprotein</keyword>
<keyword id="KW-0689">Ribosomal protein</keyword>
<keyword id="KW-0694">RNA-binding</keyword>
<keyword id="KW-0699">rRNA-binding</keyword>
<evidence type="ECO:0000255" key="1">
    <source>
        <dbReference type="HAMAP-Rule" id="MF_01326"/>
    </source>
</evidence>
<evidence type="ECO:0000305" key="2"/>
<feature type="chain" id="PRO_1000165948" description="Large ribosomal subunit protein uL24">
    <location>
        <begin position="1"/>
        <end position="103"/>
    </location>
</feature>
<organism>
    <name type="scientific">Glaesserella parasuis serovar 5 (strain SH0165)</name>
    <name type="common">Haemophilus parasuis</name>
    <dbReference type="NCBI Taxonomy" id="557723"/>
    <lineage>
        <taxon>Bacteria</taxon>
        <taxon>Pseudomonadati</taxon>
        <taxon>Pseudomonadota</taxon>
        <taxon>Gammaproteobacteria</taxon>
        <taxon>Pasteurellales</taxon>
        <taxon>Pasteurellaceae</taxon>
        <taxon>Glaesserella</taxon>
    </lineage>
</organism>
<comment type="function">
    <text evidence="1">One of two assembly initiator proteins, it binds directly to the 5'-end of the 23S rRNA, where it nucleates assembly of the 50S subunit.</text>
</comment>
<comment type="function">
    <text evidence="1">One of the proteins that surrounds the polypeptide exit tunnel on the outside of the subunit.</text>
</comment>
<comment type="subunit">
    <text evidence="1">Part of the 50S ribosomal subunit.</text>
</comment>
<comment type="similarity">
    <text evidence="1">Belongs to the universal ribosomal protein uL24 family.</text>
</comment>
<gene>
    <name evidence="1" type="primary">rplX</name>
    <name type="ordered locus">HAPS_1443</name>
</gene>
<accession>B8F6R0</accession>
<reference key="1">
    <citation type="journal article" date="2009" name="J. Bacteriol.">
        <title>Complete genome sequence of Haemophilus parasuis SH0165.</title>
        <authorList>
            <person name="Yue M."/>
            <person name="Yang F."/>
            <person name="Yang J."/>
            <person name="Bei W."/>
            <person name="Cai X."/>
            <person name="Chen L."/>
            <person name="Dong J."/>
            <person name="Zhou R."/>
            <person name="Jin M."/>
            <person name="Jin Q."/>
            <person name="Chen H."/>
        </authorList>
    </citation>
    <scope>NUCLEOTIDE SEQUENCE [LARGE SCALE GENOMIC DNA]</scope>
    <source>
        <strain>SH0165</strain>
    </source>
</reference>
<dbReference type="EMBL" id="CP001321">
    <property type="protein sequence ID" value="ACL33012.1"/>
    <property type="molecule type" value="Genomic_DNA"/>
</dbReference>
<dbReference type="RefSeq" id="WP_005711996.1">
    <property type="nucleotide sequence ID" value="NC_011852.1"/>
</dbReference>
<dbReference type="SMR" id="B8F6R0"/>
<dbReference type="STRING" id="557723.HAPS_1443"/>
<dbReference type="GeneID" id="66617808"/>
<dbReference type="KEGG" id="hap:HAPS_1443"/>
<dbReference type="HOGENOM" id="CLU_093315_2_2_6"/>
<dbReference type="Proteomes" id="UP000006743">
    <property type="component" value="Chromosome"/>
</dbReference>
<dbReference type="GO" id="GO:1990904">
    <property type="term" value="C:ribonucleoprotein complex"/>
    <property type="evidence" value="ECO:0007669"/>
    <property type="project" value="UniProtKB-KW"/>
</dbReference>
<dbReference type="GO" id="GO:0005840">
    <property type="term" value="C:ribosome"/>
    <property type="evidence" value="ECO:0007669"/>
    <property type="project" value="UniProtKB-KW"/>
</dbReference>
<dbReference type="GO" id="GO:0019843">
    <property type="term" value="F:rRNA binding"/>
    <property type="evidence" value="ECO:0007669"/>
    <property type="project" value="UniProtKB-UniRule"/>
</dbReference>
<dbReference type="GO" id="GO:0003735">
    <property type="term" value="F:structural constituent of ribosome"/>
    <property type="evidence" value="ECO:0007669"/>
    <property type="project" value="InterPro"/>
</dbReference>
<dbReference type="GO" id="GO:0006412">
    <property type="term" value="P:translation"/>
    <property type="evidence" value="ECO:0007669"/>
    <property type="project" value="UniProtKB-UniRule"/>
</dbReference>
<dbReference type="CDD" id="cd06089">
    <property type="entry name" value="KOW_RPL26"/>
    <property type="match status" value="1"/>
</dbReference>
<dbReference type="FunFam" id="2.30.30.30:FF:000004">
    <property type="entry name" value="50S ribosomal protein L24"/>
    <property type="match status" value="1"/>
</dbReference>
<dbReference type="Gene3D" id="2.30.30.30">
    <property type="match status" value="1"/>
</dbReference>
<dbReference type="HAMAP" id="MF_01326_B">
    <property type="entry name" value="Ribosomal_uL24_B"/>
    <property type="match status" value="1"/>
</dbReference>
<dbReference type="InterPro" id="IPR005824">
    <property type="entry name" value="KOW"/>
</dbReference>
<dbReference type="InterPro" id="IPR014722">
    <property type="entry name" value="Rib_uL2_dom2"/>
</dbReference>
<dbReference type="InterPro" id="IPR003256">
    <property type="entry name" value="Ribosomal_uL24"/>
</dbReference>
<dbReference type="InterPro" id="IPR005825">
    <property type="entry name" value="Ribosomal_uL24_CS"/>
</dbReference>
<dbReference type="InterPro" id="IPR041988">
    <property type="entry name" value="Ribosomal_uL24_KOW"/>
</dbReference>
<dbReference type="InterPro" id="IPR008991">
    <property type="entry name" value="Translation_prot_SH3-like_sf"/>
</dbReference>
<dbReference type="NCBIfam" id="TIGR01079">
    <property type="entry name" value="rplX_bact"/>
    <property type="match status" value="1"/>
</dbReference>
<dbReference type="PANTHER" id="PTHR12903">
    <property type="entry name" value="MITOCHONDRIAL RIBOSOMAL PROTEIN L24"/>
    <property type="match status" value="1"/>
</dbReference>
<dbReference type="Pfam" id="PF00467">
    <property type="entry name" value="KOW"/>
    <property type="match status" value="1"/>
</dbReference>
<dbReference type="Pfam" id="PF17136">
    <property type="entry name" value="ribosomal_L24"/>
    <property type="match status" value="1"/>
</dbReference>
<dbReference type="SMART" id="SM00739">
    <property type="entry name" value="KOW"/>
    <property type="match status" value="1"/>
</dbReference>
<dbReference type="SUPFAM" id="SSF50104">
    <property type="entry name" value="Translation proteins SH3-like domain"/>
    <property type="match status" value="1"/>
</dbReference>
<dbReference type="PROSITE" id="PS01108">
    <property type="entry name" value="RIBOSOMAL_L24"/>
    <property type="match status" value="1"/>
</dbReference>